<dbReference type="EMBL" id="U73857">
    <property type="protein sequence ID" value="AAB18019.1"/>
    <property type="molecule type" value="Genomic_DNA"/>
</dbReference>
<dbReference type="EMBL" id="U00096">
    <property type="protein sequence ID" value="AAC73393.1"/>
    <property type="molecule type" value="Genomic_DNA"/>
</dbReference>
<dbReference type="EMBL" id="AP009048">
    <property type="protein sequence ID" value="BAE76074.1"/>
    <property type="molecule type" value="Genomic_DNA"/>
</dbReference>
<dbReference type="PIR" id="B64755">
    <property type="entry name" value="B64755"/>
</dbReference>
<dbReference type="RefSeq" id="NP_414824.1">
    <property type="nucleotide sequence ID" value="NC_000913.3"/>
</dbReference>
<dbReference type="RefSeq" id="WP_001310578.1">
    <property type="nucleotide sequence ID" value="NZ_SSZK01000048.1"/>
</dbReference>
<dbReference type="BioGRID" id="4261569">
    <property type="interactions" value="15"/>
</dbReference>
<dbReference type="DIP" id="DIP-11249N"/>
<dbReference type="FunCoup" id="P77694">
    <property type="interactions" value="75"/>
</dbReference>
<dbReference type="IntAct" id="P77694">
    <property type="interactions" value="4"/>
</dbReference>
<dbReference type="STRING" id="511145.b0290"/>
<dbReference type="PaxDb" id="511145-b0290"/>
<dbReference type="EnsemblBacteria" id="AAC73393">
    <property type="protein sequence ID" value="AAC73393"/>
    <property type="gene ID" value="b0290"/>
</dbReference>
<dbReference type="GeneID" id="947349"/>
<dbReference type="KEGG" id="ecj:JW0284"/>
<dbReference type="KEGG" id="eco:b0290"/>
<dbReference type="KEGG" id="ecoc:C3026_01415"/>
<dbReference type="KEGG" id="ecoc:C3026_24045"/>
<dbReference type="PATRIC" id="fig|1411691.4.peg.1988"/>
<dbReference type="EchoBASE" id="EB3332"/>
<dbReference type="eggNOG" id="ENOG502Z8ZC">
    <property type="taxonomic scope" value="Bacteria"/>
</dbReference>
<dbReference type="HOGENOM" id="CLU_039494_0_0_6"/>
<dbReference type="InParanoid" id="P77694"/>
<dbReference type="OMA" id="VEATWRN"/>
<dbReference type="OrthoDB" id="6490804at2"/>
<dbReference type="BioCyc" id="EcoCyc:G6161-MONOMER"/>
<dbReference type="PRO" id="PR:P77694"/>
<dbReference type="Proteomes" id="UP000000625">
    <property type="component" value="Chromosome"/>
</dbReference>
<dbReference type="GO" id="GO:0009289">
    <property type="term" value="C:pilus"/>
    <property type="evidence" value="ECO:0007669"/>
    <property type="project" value="UniProtKB-SubCell"/>
</dbReference>
<gene>
    <name type="primary">ecpD</name>
    <name type="synonym">matE</name>
    <name type="synonym">yagW</name>
    <name type="ordered locus">b0290</name>
    <name type="ordered locus">JW0284</name>
</gene>
<comment type="function">
    <text evidence="1">Part of the ecpRABCDE operon, which encodes the E.coli common pilus (ECP). ECP is found in both commensal and pathogenic strains and plays a dual role in early-stage biofilm development and host cell recognition. Tip pilus adhesin, which is required for assembly of EcpA into fibers (By similarity).</text>
</comment>
<comment type="subunit">
    <text evidence="1">Forms polymers. Interacts with EcpA.</text>
</comment>
<comment type="subcellular location">
    <subcellularLocation>
        <location evidence="1">Fimbrium</location>
    </subcellularLocation>
</comment>
<comment type="induction">
    <text evidence="1">Negatively regulated by H-NS. Positively regulated by IHF and EcpR (By similarity).</text>
</comment>
<comment type="miscellaneous">
    <text evidence="4">Not expressed under classical laboratory conditions, but is functional when constitutively expressed.</text>
</comment>
<comment type="similarity">
    <text evidence="3">Belongs to the EcpD/MatE family.</text>
</comment>
<accession>P77694</accession>
<accession>Q2MCD2</accession>
<name>ECPD_ECOLI</name>
<feature type="signal peptide" evidence="2">
    <location>
        <begin position="1"/>
        <end position="23"/>
    </location>
</feature>
<feature type="chain" id="PRO_0000168565" description="Fimbria adhesin EcpD">
    <location>
        <begin position="24"/>
        <end position="547"/>
    </location>
</feature>
<organism>
    <name type="scientific">Escherichia coli (strain K12)</name>
    <dbReference type="NCBI Taxonomy" id="83333"/>
    <lineage>
        <taxon>Bacteria</taxon>
        <taxon>Pseudomonadati</taxon>
        <taxon>Pseudomonadota</taxon>
        <taxon>Gammaproteobacteria</taxon>
        <taxon>Enterobacterales</taxon>
        <taxon>Enterobacteriaceae</taxon>
        <taxon>Escherichia</taxon>
    </lineage>
</organism>
<protein>
    <recommendedName>
        <fullName>Fimbria adhesin EcpD</fullName>
    </recommendedName>
</protein>
<proteinExistence type="inferred from homology"/>
<reference key="1">
    <citation type="submission" date="1997-01" db="EMBL/GenBank/DDBJ databases">
        <title>Sequence of minutes 4-25 of Escherichia coli.</title>
        <authorList>
            <person name="Chung E."/>
            <person name="Allen E."/>
            <person name="Araujo R."/>
            <person name="Aparicio A.M."/>
            <person name="Davis K."/>
            <person name="Duncan M."/>
            <person name="Federspiel N."/>
            <person name="Hyman R."/>
            <person name="Kalman S."/>
            <person name="Komp C."/>
            <person name="Kurdi O."/>
            <person name="Lew H."/>
            <person name="Lin D."/>
            <person name="Namath A."/>
            <person name="Oefner P."/>
            <person name="Roberts D."/>
            <person name="Schramm S."/>
            <person name="Davis R.W."/>
        </authorList>
    </citation>
    <scope>NUCLEOTIDE SEQUENCE [LARGE SCALE GENOMIC DNA]</scope>
    <source>
        <strain>K12 / MG1655 / ATCC 47076</strain>
    </source>
</reference>
<reference key="2">
    <citation type="journal article" date="1997" name="Science">
        <title>The complete genome sequence of Escherichia coli K-12.</title>
        <authorList>
            <person name="Blattner F.R."/>
            <person name="Plunkett G. III"/>
            <person name="Bloch C.A."/>
            <person name="Perna N.T."/>
            <person name="Burland V."/>
            <person name="Riley M."/>
            <person name="Collado-Vides J."/>
            <person name="Glasner J.D."/>
            <person name="Rode C.K."/>
            <person name="Mayhew G.F."/>
            <person name="Gregor J."/>
            <person name="Davis N.W."/>
            <person name="Kirkpatrick H.A."/>
            <person name="Goeden M.A."/>
            <person name="Rose D.J."/>
            <person name="Mau B."/>
            <person name="Shao Y."/>
        </authorList>
    </citation>
    <scope>NUCLEOTIDE SEQUENCE [LARGE SCALE GENOMIC DNA]</scope>
    <source>
        <strain>K12 / MG1655 / ATCC 47076</strain>
    </source>
</reference>
<reference key="3">
    <citation type="journal article" date="2006" name="Mol. Syst. Biol.">
        <title>Highly accurate genome sequences of Escherichia coli K-12 strains MG1655 and W3110.</title>
        <authorList>
            <person name="Hayashi K."/>
            <person name="Morooka N."/>
            <person name="Yamamoto Y."/>
            <person name="Fujita K."/>
            <person name="Isono K."/>
            <person name="Choi S."/>
            <person name="Ohtsubo E."/>
            <person name="Baba T."/>
            <person name="Wanner B.L."/>
            <person name="Mori H."/>
            <person name="Horiuchi T."/>
        </authorList>
    </citation>
    <scope>NUCLEOTIDE SEQUENCE [LARGE SCALE GENOMIC DNA]</scope>
    <source>
        <strain>K12 / W3110 / ATCC 27325 / DSM 5911</strain>
    </source>
</reference>
<reference key="4">
    <citation type="journal article" date="2010" name="Microbiology">
        <title>Mat fimbriae promote biofilm formation by meningitis-associated Escherichia coli.</title>
        <authorList>
            <person name="Lehti T.A."/>
            <person name="Bauchart P."/>
            <person name="Heikkinen J."/>
            <person name="Hacker J."/>
            <person name="Korhonen T.K."/>
            <person name="Dobrindt U."/>
            <person name="Westerlund-Wikstrom B."/>
        </authorList>
    </citation>
    <scope>EXPRESSION</scope>
    <source>
        <strain>K12</strain>
    </source>
</reference>
<sequence>MRVNLLITMIIFALIWPVTALRAAVSKTTWADAPAREFVFVENNSDDNFFVTPGGALDPRLTGANRWTGLKYTGSGTIYQQSLGYIDNGYNTGLYTNWKFDMWLENSPVSSPLTGLRCINWYAGCNMTTSLILPQTTDASGFYGATVTSGGAKWMHGMLSDAFYQYMQQMPVGSSFTMTINACQTSVNYDASSGARCKDQASGNWYVRNVTHTKAANLRLINTHSLAEVFINSDGVPTLGEGNADCRTQTIGSRSGLSCKMVNYTLQTNGLSNTSIHIFPAIANSSLASAVGAYDMQFSLNGSSWKPVSNTAYYYTFNEMKSADSIYVFFSSNFFKQMVNLGISDINTKDLFNFRFQNTTSPESGWYEFSTSNTLIIKPRDFSISIISDEYTQTPSREGYVGSGESALDFGYIVTTSGKTAADEVLIKVTGPAQVIGGRSYCVFSSDDGKAKVPFPATLSFITRNGATKTYDAGCDDSWRDMTDALWLTTPWTDISGEVGQMDKTTVKFSIPMDNAISLRTVDDNGWFGEVSASGEIHVQATWRNIN</sequence>
<evidence type="ECO:0000250" key="1"/>
<evidence type="ECO:0000255" key="2"/>
<evidence type="ECO:0000305" key="3"/>
<evidence type="ECO:0000305" key="4">
    <source>
    </source>
</evidence>
<keyword id="KW-0281">Fimbrium</keyword>
<keyword id="KW-1185">Reference proteome</keyword>
<keyword id="KW-0732">Signal</keyword>